<sequence>MKGTCVIAWLFSSLGLWRLAHPEAQGTTQCQRTEHPVISYKEIGPWLREFRAKNAVDFSQLTFDPGQKELVVGARNYLFRLQLEDLSLIQAVEWECDEATKKACYSKGKSKEECQNYIRVLLVGGDRLFTCGTNAFTPVCTNRSLSNLTEIHDQISGMARCPYSPQHNSTALLTAGGELYAATAMDFPGRDPAIYRSLGILPPLRTAQYNSKWLNEPNFVSSYDIGNFTYFFFRENAVEHDCGKTVFSRAARVCKNDIGGRFLLEDTWTTFMKARLNCSRPGEVPFYYNELQSTFFLPELDLIYGIFTTNVNSIAASAVCVFNLSAIAQAFSGPFKYQENSRSAWLPYPNPNPHFQCGTVDQGLYVNLTERNLQDAQKFILMHEVVQPVTTVPSFMEDNSRFSHVAVDVVQGREALVHIIYLATDYGTIKKVRVPLNQTSSSCLLEEIELFPERRREPIRSLQILHSQSVLFVGLREHVVKIPLKRCQFYRTRSTCIGAQDPYCGWDVVMKKCTSLEESLSMTQWEQSISACPTRNLTVDGHFGVWSPWTPCTHTDGSAVGSCLCRTRSCDSPAPQCGGWQCEGPGMEIANCSRNGGWTPWTSWSPCSTTCGIGFQVRQRSCSNPTPRHGGRVCVGQNREERYCNEHLLCPPHMFWTGWGPWERCTAQCGGGIQARRRICENGPDCAGCNVEYQSCNTNPCPELKKTTPWTPWTPVNISDNGGHYEQRFRYTCKARLADPNLLEVGRQRIEMRYCSSDGTSGCSTDGLSGDFLRAGRYSAHTVNGAWSAWTSWSQCSRDCSRGIRNRKRVCNNPEPKYGGMPCLGPSLEYQECNILPCPVDGVWSCWSPWTKCSATCGGGHYMRTRSCSNPAPAYGGDICLGLHTEEALCNTQPCPESWSEWSDWSECEASGVQVRARQCILLFPMGSQCSGNTTESRPCVFDSNFIPEVSVARSSSVEEKRCGEFNMFHMIAVGLSSSILGCLLTLLVYTYCQRYQQQSHDATVIHPVSPAPLNTSITNHINKLDKYDSVEAIKAFNKNNLILEERNKYFNPHLTGKTYSNAYFTDLNNYDEY</sequence>
<keyword id="KW-0002">3D-structure</keyword>
<keyword id="KW-0217">Developmental protein</keyword>
<keyword id="KW-0221">Differentiation</keyword>
<keyword id="KW-1015">Disulfide bond</keyword>
<keyword id="KW-0325">Glycoprotein</keyword>
<keyword id="KW-0472">Membrane</keyword>
<keyword id="KW-0524">Neurogenesis</keyword>
<keyword id="KW-1267">Proteomics identification</keyword>
<keyword id="KW-1185">Reference proteome</keyword>
<keyword id="KW-0677">Repeat</keyword>
<keyword id="KW-0732">Signal</keyword>
<keyword id="KW-0812">Transmembrane</keyword>
<keyword id="KW-1133">Transmembrane helix</keyword>
<protein>
    <recommendedName>
        <fullName>Semaphorin-5A</fullName>
    </recommendedName>
    <alternativeName>
        <fullName>Semaphorin-F</fullName>
        <shortName>Sema F</shortName>
    </alternativeName>
</protein>
<organism>
    <name type="scientific">Homo sapiens</name>
    <name type="common">Human</name>
    <dbReference type="NCBI Taxonomy" id="9606"/>
    <lineage>
        <taxon>Eukaryota</taxon>
        <taxon>Metazoa</taxon>
        <taxon>Chordata</taxon>
        <taxon>Craniata</taxon>
        <taxon>Vertebrata</taxon>
        <taxon>Euteleostomi</taxon>
        <taxon>Mammalia</taxon>
        <taxon>Eutheria</taxon>
        <taxon>Euarchontoglires</taxon>
        <taxon>Primates</taxon>
        <taxon>Haplorrhini</taxon>
        <taxon>Catarrhini</taxon>
        <taxon>Hominidae</taxon>
        <taxon>Homo</taxon>
    </lineage>
</organism>
<name>SEM5A_HUMAN</name>
<reference key="1">
    <citation type="journal article" date="1998" name="Biochem. Biophys. Res. Commun.">
        <title>Molecular cloning and mapping of human semaphorin F from the Cri-du-chat candidate interval.</title>
        <authorList>
            <person name="Simmons A.D."/>
            <person name="Puschel A.W."/>
            <person name="McPherson J.D."/>
            <person name="Overhauser J."/>
            <person name="Lovett M."/>
        </authorList>
    </citation>
    <scope>NUCLEOTIDE SEQUENCE [MRNA]</scope>
</reference>
<reference key="2">
    <citation type="journal article" date="2004" name="Nature">
        <title>The DNA sequence and comparative analysis of human chromosome 5.</title>
        <authorList>
            <person name="Schmutz J."/>
            <person name="Martin J."/>
            <person name="Terry A."/>
            <person name="Couronne O."/>
            <person name="Grimwood J."/>
            <person name="Lowry S."/>
            <person name="Gordon L.A."/>
            <person name="Scott D."/>
            <person name="Xie G."/>
            <person name="Huang W."/>
            <person name="Hellsten U."/>
            <person name="Tran-Gyamfi M."/>
            <person name="She X."/>
            <person name="Prabhakar S."/>
            <person name="Aerts A."/>
            <person name="Altherr M."/>
            <person name="Bajorek E."/>
            <person name="Black S."/>
            <person name="Branscomb E."/>
            <person name="Caoile C."/>
            <person name="Challacombe J.F."/>
            <person name="Chan Y.M."/>
            <person name="Denys M."/>
            <person name="Detter J.C."/>
            <person name="Escobar J."/>
            <person name="Flowers D."/>
            <person name="Fotopulos D."/>
            <person name="Glavina T."/>
            <person name="Gomez M."/>
            <person name="Gonzales E."/>
            <person name="Goodstein D."/>
            <person name="Grigoriev I."/>
            <person name="Groza M."/>
            <person name="Hammon N."/>
            <person name="Hawkins T."/>
            <person name="Haydu L."/>
            <person name="Israni S."/>
            <person name="Jett J."/>
            <person name="Kadner K."/>
            <person name="Kimball H."/>
            <person name="Kobayashi A."/>
            <person name="Lopez F."/>
            <person name="Lou Y."/>
            <person name="Martinez D."/>
            <person name="Medina C."/>
            <person name="Morgan J."/>
            <person name="Nandkeshwar R."/>
            <person name="Noonan J.P."/>
            <person name="Pitluck S."/>
            <person name="Pollard M."/>
            <person name="Predki P."/>
            <person name="Priest J."/>
            <person name="Ramirez L."/>
            <person name="Retterer J."/>
            <person name="Rodriguez A."/>
            <person name="Rogers S."/>
            <person name="Salamov A."/>
            <person name="Salazar A."/>
            <person name="Thayer N."/>
            <person name="Tice H."/>
            <person name="Tsai M."/>
            <person name="Ustaszewska A."/>
            <person name="Vo N."/>
            <person name="Wheeler J."/>
            <person name="Wu K."/>
            <person name="Yang J."/>
            <person name="Dickson M."/>
            <person name="Cheng J.-F."/>
            <person name="Eichler E.E."/>
            <person name="Olsen A."/>
            <person name="Pennacchio L.A."/>
            <person name="Rokhsar D.S."/>
            <person name="Richardson P."/>
            <person name="Lucas S.M."/>
            <person name="Myers R.M."/>
            <person name="Rubin E.M."/>
        </authorList>
    </citation>
    <scope>NUCLEOTIDE SEQUENCE [LARGE SCALE GENOMIC DNA]</scope>
</reference>
<reference key="3">
    <citation type="submission" date="2005-09" db="EMBL/GenBank/DDBJ databases">
        <authorList>
            <person name="Mural R.J."/>
            <person name="Istrail S."/>
            <person name="Sutton G.G."/>
            <person name="Florea L."/>
            <person name="Halpern A.L."/>
            <person name="Mobarry C.M."/>
            <person name="Lippert R."/>
            <person name="Walenz B."/>
            <person name="Shatkay H."/>
            <person name="Dew I."/>
            <person name="Miller J.R."/>
            <person name="Flanigan M.J."/>
            <person name="Edwards N.J."/>
            <person name="Bolanos R."/>
            <person name="Fasulo D."/>
            <person name="Halldorsson B.V."/>
            <person name="Hannenhalli S."/>
            <person name="Turner R."/>
            <person name="Yooseph S."/>
            <person name="Lu F."/>
            <person name="Nusskern D.R."/>
            <person name="Shue B.C."/>
            <person name="Zheng X.H."/>
            <person name="Zhong F."/>
            <person name="Delcher A.L."/>
            <person name="Huson D.H."/>
            <person name="Kravitz S.A."/>
            <person name="Mouchard L."/>
            <person name="Reinert K."/>
            <person name="Remington K.A."/>
            <person name="Clark A.G."/>
            <person name="Waterman M.S."/>
            <person name="Eichler E.E."/>
            <person name="Adams M.D."/>
            <person name="Hunkapiller M.W."/>
            <person name="Myers E.W."/>
            <person name="Venter J.C."/>
        </authorList>
    </citation>
    <scope>NUCLEOTIDE SEQUENCE [LARGE SCALE GENOMIC DNA]</scope>
</reference>
<reference key="4">
    <citation type="journal article" date="2004" name="Genome Res.">
        <title>The status, quality, and expansion of the NIH full-length cDNA project: the Mammalian Gene Collection (MGC).</title>
        <authorList>
            <consortium name="The MGC Project Team"/>
        </authorList>
    </citation>
    <scope>NUCLEOTIDE SEQUENCE [LARGE SCALE MRNA]</scope>
</reference>
<reference key="5">
    <citation type="journal article" date="2004" name="EMBO Rep.">
        <title>Plexin-B3 is a functional receptor for semaphorin 5A.</title>
        <authorList>
            <person name="Artigiani S."/>
            <person name="Conrotto P."/>
            <person name="Fazzari P."/>
            <person name="Gilestro G.F."/>
            <person name="Barberis D."/>
            <person name="Giordano S."/>
            <person name="Comoglio P.M."/>
            <person name="Tamagnone L."/>
        </authorList>
    </citation>
    <scope>FUNCTION</scope>
    <scope>INTERACTION WITH PLXNB3</scope>
</reference>
<reference key="6">
    <citation type="journal article" date="2010" name="J. Biol. Chem.">
        <title>Semaphorin 5A and plexin-B3 inhibit human glioma cell motility through RhoGDIalpha-mediated inactivation of Rac1 GTPase.</title>
        <authorList>
            <person name="Li X."/>
            <person name="Lee A.Y."/>
        </authorList>
    </citation>
    <scope>FUNCTION</scope>
</reference>
<reference key="7">
    <citation type="journal article" date="2010" name="Microvasc. Res.">
        <title>Semaphorin 5A promotes angiogenesis by increasing endothelial cell proliferation, migration, and decreasing apoptosis.</title>
        <authorList>
            <person name="Sadanandam A."/>
            <person name="Rosenbaugh E.G."/>
            <person name="Singh S."/>
            <person name="Varney M."/>
            <person name="Singh R.K."/>
        </authorList>
    </citation>
    <scope>FUNCTION</scope>
</reference>
<reference key="8">
    <citation type="journal article" date="2012" name="Oncogene">
        <title>Semaphorin 5A and plexin-B3 regulate human glioma cell motility and morphology through Rac1 and the actin cytoskeleton.</title>
        <authorList>
            <person name="Li X."/>
            <person name="Law J.W."/>
            <person name="Lee A.Y."/>
        </authorList>
    </citation>
    <scope>FUNCTION</scope>
</reference>
<reference key="9">
    <citation type="journal article" date="2015" name="Neuron">
        <title>Targeted DNA Sequencing from Autism Spectrum Disorder Brains Implicates Multiple Genetic Mechanisms.</title>
        <authorList>
            <person name="D'Gama A.M."/>
            <person name="Pochareddy S."/>
            <person name="Li M."/>
            <person name="Jamuar S.S."/>
            <person name="Reiff R.E."/>
            <person name="Lam A.T."/>
            <person name="Sestan N."/>
            <person name="Walsh C.A."/>
        </authorList>
    </citation>
    <scope>VARIANT 196-ARG--TYR-1074 DEL</scope>
</reference>
<evidence type="ECO:0000250" key="1"/>
<evidence type="ECO:0000255" key="2"/>
<evidence type="ECO:0000255" key="3">
    <source>
        <dbReference type="PROSITE-ProRule" id="PRU00210"/>
    </source>
</evidence>
<evidence type="ECO:0000255" key="4">
    <source>
        <dbReference type="PROSITE-ProRule" id="PRU00352"/>
    </source>
</evidence>
<evidence type="ECO:0000269" key="5">
    <source>
    </source>
</evidence>
<evidence type="ECO:0000269" key="6">
    <source>
    </source>
</evidence>
<evidence type="ECO:0000269" key="7">
    <source>
    </source>
</evidence>
<evidence type="ECO:0000269" key="8">
    <source>
    </source>
</evidence>
<evidence type="ECO:0000269" key="9">
    <source>
    </source>
</evidence>
<evidence type="ECO:0000305" key="10"/>
<evidence type="ECO:0007829" key="11">
    <source>
        <dbReference type="PDB" id="8CKK"/>
    </source>
</evidence>
<evidence type="ECO:0007829" key="12">
    <source>
        <dbReference type="PDB" id="8CKM"/>
    </source>
</evidence>
<accession>Q13591</accession>
<accession>D3DTC6</accession>
<accession>O60408</accession>
<accession>Q1RLL9</accession>
<proteinExistence type="evidence at protein level"/>
<comment type="function">
    <text evidence="1 5 6 7 8">Bifunctional axonal guidance cue regulated by sulfated proteoglycans; attractive effects result from interactions with heparan sulfate proteoglycans (HSPGs), while the inhibitory effects depend on interactions with chondroitin sulfate proteoglycans (CSPGs) (By similarity). Ligand for receptor PLXNB3. In glioma cells, SEMA5A stimulation of PLXNB3 results in the disassembly of F-actin stress fibers, disruption of focal adhesions and cellular collapse as well as inhibition of cell migration and invasion through ARHGDIA-mediated inactivation of RAC1. May promote angiogenesis by increasing endothelial cell proliferation and migration and inhibiting apoptosis.</text>
</comment>
<comment type="subunit">
    <text>Binds PLXNB3.</text>
</comment>
<comment type="subcellular location">
    <subcellularLocation>
        <location>Membrane</location>
        <topology>Single-pass type I membrane protein</topology>
    </subcellularLocation>
</comment>
<comment type="similarity">
    <text evidence="10">Belongs to the semaphorin family.</text>
</comment>
<feature type="signal peptide" evidence="2">
    <location>
        <begin position="1"/>
        <end position="22"/>
    </location>
</feature>
<feature type="chain" id="PRO_0000032335" description="Semaphorin-5A">
    <location>
        <begin position="23"/>
        <end position="1074"/>
    </location>
</feature>
<feature type="topological domain" description="Extracellular" evidence="2">
    <location>
        <begin position="23"/>
        <end position="968"/>
    </location>
</feature>
<feature type="transmembrane region" description="Helical" evidence="2">
    <location>
        <begin position="969"/>
        <end position="989"/>
    </location>
</feature>
<feature type="topological domain" description="Cytoplasmic" evidence="2">
    <location>
        <begin position="990"/>
        <end position="1074"/>
    </location>
</feature>
<feature type="domain" description="Sema" evidence="4">
    <location>
        <begin position="35"/>
        <end position="484"/>
    </location>
</feature>
<feature type="domain" description="TSP type-1 1" evidence="3">
    <location>
        <begin position="540"/>
        <end position="593"/>
    </location>
</feature>
<feature type="domain" description="TSP type-1 2" evidence="3">
    <location>
        <begin position="595"/>
        <end position="651"/>
    </location>
</feature>
<feature type="domain" description="TSP type-1 3" evidence="3">
    <location>
        <begin position="653"/>
        <end position="702"/>
    </location>
</feature>
<feature type="domain" description="TSP type-1 4" evidence="3">
    <location>
        <begin position="707"/>
        <end position="765"/>
    </location>
</feature>
<feature type="domain" description="TSP type-1 5" evidence="3">
    <location>
        <begin position="784"/>
        <end position="839"/>
    </location>
</feature>
<feature type="domain" description="TSP type-1 6" evidence="3">
    <location>
        <begin position="841"/>
        <end position="896"/>
    </location>
</feature>
<feature type="domain" description="TSP type-1 7" evidence="3">
    <location>
        <begin position="897"/>
        <end position="944"/>
    </location>
</feature>
<feature type="glycosylation site" description="N-linked (GlcNAc...) asparagine" evidence="2">
    <location>
        <position position="142"/>
    </location>
</feature>
<feature type="glycosylation site" description="N-linked (GlcNAc...) asparagine" evidence="2">
    <location>
        <position position="168"/>
    </location>
</feature>
<feature type="glycosylation site" description="N-linked (GlcNAc...) asparagine" evidence="2">
    <location>
        <position position="227"/>
    </location>
</feature>
<feature type="glycosylation site" description="N-linked (GlcNAc...) asparagine" evidence="2">
    <location>
        <position position="277"/>
    </location>
</feature>
<feature type="glycosylation site" description="N-linked (GlcNAc...) asparagine" evidence="2">
    <location>
        <position position="323"/>
    </location>
</feature>
<feature type="glycosylation site" description="N-linked (GlcNAc...) asparagine" evidence="2">
    <location>
        <position position="367"/>
    </location>
</feature>
<feature type="glycosylation site" description="N-linked (GlcNAc...) asparagine" evidence="2">
    <location>
        <position position="437"/>
    </location>
</feature>
<feature type="glycosylation site" description="N-linked (GlcNAc...) asparagine" evidence="2">
    <location>
        <position position="536"/>
    </location>
</feature>
<feature type="glycosylation site" description="N-linked (GlcNAc...) asparagine" evidence="2">
    <location>
        <position position="591"/>
    </location>
</feature>
<feature type="glycosylation site" description="N-linked (GlcNAc...) asparagine" evidence="2">
    <location>
        <position position="717"/>
    </location>
</feature>
<feature type="glycosylation site" description="N-linked (GlcNAc...) asparagine" evidence="2">
    <location>
        <position position="933"/>
    </location>
</feature>
<feature type="disulfide bond" evidence="1">
    <location>
        <begin position="104"/>
        <end position="114"/>
    </location>
</feature>
<feature type="disulfide bond" evidence="1">
    <location>
        <begin position="131"/>
        <end position="140"/>
    </location>
</feature>
<feature type="disulfide bond" evidence="1">
    <location>
        <begin position="254"/>
        <end position="357"/>
    </location>
</feature>
<feature type="disulfide bond" evidence="1">
    <location>
        <begin position="278"/>
        <end position="320"/>
    </location>
</feature>
<feature type="disulfide bond" evidence="1">
    <location>
        <begin position="487"/>
        <end position="504"/>
    </location>
</feature>
<feature type="disulfide bond" evidence="1">
    <location>
        <begin position="496"/>
        <end position="513"/>
    </location>
</feature>
<feature type="disulfide bond" evidence="1">
    <location>
        <begin position="607"/>
        <end position="644"/>
    </location>
</feature>
<feature type="disulfide bond" evidence="1">
    <location>
        <begin position="611"/>
        <end position="650"/>
    </location>
</feature>
<feature type="disulfide bond" evidence="1">
    <location>
        <begin position="622"/>
        <end position="634"/>
    </location>
</feature>
<feature type="disulfide bond" evidence="1">
    <location>
        <begin position="665"/>
        <end position="696"/>
    </location>
</feature>
<feature type="disulfide bond" evidence="1">
    <location>
        <begin position="669"/>
        <end position="701"/>
    </location>
</feature>
<feature type="disulfide bond" evidence="1">
    <location>
        <begin position="680"/>
        <end position="686"/>
    </location>
</feature>
<feature type="disulfide bond" evidence="1">
    <location>
        <begin position="796"/>
        <end position="833"/>
    </location>
</feature>
<feature type="disulfide bond" evidence="1">
    <location>
        <begin position="800"/>
        <end position="838"/>
    </location>
</feature>
<feature type="disulfide bond" evidence="1">
    <location>
        <begin position="811"/>
        <end position="823"/>
    </location>
</feature>
<feature type="disulfide bond" evidence="1">
    <location>
        <begin position="853"/>
        <end position="890"/>
    </location>
</feature>
<feature type="disulfide bond" evidence="1">
    <location>
        <begin position="857"/>
        <end position="895"/>
    </location>
</feature>
<feature type="disulfide bond" evidence="1">
    <location>
        <begin position="868"/>
        <end position="880"/>
    </location>
</feature>
<feature type="sequence variant" id="VAR_078706" description="Found in a patient with autism spectrum disorder; uncertain significance." evidence="9">
    <location>
        <begin position="196"/>
        <end position="1074"/>
    </location>
</feature>
<feature type="sequence variant" id="VAR_030294" description="In dbSNP:rs1806079.">
    <original>V</original>
    <variation>L</variation>
    <location>
        <position position="246"/>
    </location>
</feature>
<feature type="sequence variant" id="VAR_030295" description="In dbSNP:rs2290734.">
    <original>S</original>
    <variation>L</variation>
    <location>
        <position position="792"/>
    </location>
</feature>
<feature type="sequence conflict" description="In Ref. 1; AAC09473." evidence="10" ref="1">
    <original>V</original>
    <variation>A</variation>
    <location>
        <position position="56"/>
    </location>
</feature>
<feature type="sequence conflict" description="In Ref. 1; AAC09473." evidence="10" ref="1">
    <original>T</original>
    <variation>A</variation>
    <location>
        <position position="149"/>
    </location>
</feature>
<feature type="sequence conflict" description="In Ref. 1; AAC09473." evidence="10" ref="1">
    <original>M</original>
    <variation>V</variation>
    <location>
        <position position="382"/>
    </location>
</feature>
<feature type="sequence conflict" description="In Ref. 2; AAC14668." evidence="10" ref="2">
    <original>S</original>
    <variation>R</variation>
    <location>
        <position position="494"/>
    </location>
</feature>
<feature type="sequence conflict" description="In Ref. 1; AAC09473." evidence="10" ref="1">
    <original>G</original>
    <variation>D</variation>
    <location>
        <position position="723"/>
    </location>
</feature>
<feature type="sequence conflict" description="In Ref. 1; AAC09473." evidence="10" ref="1">
    <original>I</original>
    <variation>T</variation>
    <location>
        <position position="835"/>
    </location>
</feature>
<feature type="strand" evidence="11">
    <location>
        <begin position="668"/>
        <end position="670"/>
    </location>
</feature>
<feature type="strand" evidence="11">
    <location>
        <begin position="672"/>
        <end position="677"/>
    </location>
</feature>
<feature type="strand" evidence="11">
    <location>
        <begin position="690"/>
        <end position="696"/>
    </location>
</feature>
<feature type="strand" evidence="11">
    <location>
        <begin position="703"/>
        <end position="707"/>
    </location>
</feature>
<feature type="strand" evidence="11">
    <location>
        <begin position="714"/>
        <end position="717"/>
    </location>
</feature>
<feature type="strand" evidence="11">
    <location>
        <begin position="720"/>
        <end position="722"/>
    </location>
</feature>
<feature type="strand" evidence="11">
    <location>
        <begin position="724"/>
        <end position="730"/>
    </location>
</feature>
<feature type="strand" evidence="11">
    <location>
        <begin position="732"/>
        <end position="736"/>
    </location>
</feature>
<feature type="helix" evidence="11">
    <location>
        <begin position="740"/>
        <end position="742"/>
    </location>
</feature>
<feature type="strand" evidence="11">
    <location>
        <begin position="743"/>
        <end position="745"/>
    </location>
</feature>
<feature type="strand" evidence="11">
    <location>
        <begin position="749"/>
        <end position="755"/>
    </location>
</feature>
<feature type="strand" evidence="11">
    <location>
        <begin position="757"/>
        <end position="761"/>
    </location>
</feature>
<feature type="strand" evidence="12">
    <location>
        <begin position="763"/>
        <end position="765"/>
    </location>
</feature>
<dbReference type="EMBL" id="U52840">
    <property type="protein sequence ID" value="AAC09473.1"/>
    <property type="molecule type" value="mRNA"/>
</dbReference>
<dbReference type="EMBL" id="AC004615">
    <property type="protein sequence ID" value="AAC14668.1"/>
    <property type="molecule type" value="Genomic_DNA"/>
</dbReference>
<dbReference type="EMBL" id="AC022446">
    <property type="status" value="NOT_ANNOTATED_CDS"/>
    <property type="molecule type" value="Genomic_DNA"/>
</dbReference>
<dbReference type="EMBL" id="AC027336">
    <property type="status" value="NOT_ANNOTATED_CDS"/>
    <property type="molecule type" value="Genomic_DNA"/>
</dbReference>
<dbReference type="EMBL" id="AC091906">
    <property type="status" value="NOT_ANNOTATED_CDS"/>
    <property type="molecule type" value="Genomic_DNA"/>
</dbReference>
<dbReference type="EMBL" id="CH471102">
    <property type="protein sequence ID" value="EAX08078.1"/>
    <property type="molecule type" value="Genomic_DNA"/>
</dbReference>
<dbReference type="EMBL" id="CH471102">
    <property type="protein sequence ID" value="EAX08079.1"/>
    <property type="molecule type" value="Genomic_DNA"/>
</dbReference>
<dbReference type="EMBL" id="BC115696">
    <property type="protein sequence ID" value="AAI15697.1"/>
    <property type="molecule type" value="mRNA"/>
</dbReference>
<dbReference type="CCDS" id="CCDS3875.1"/>
<dbReference type="PIR" id="JC5928">
    <property type="entry name" value="JC5928"/>
</dbReference>
<dbReference type="RefSeq" id="NP_003957.2">
    <property type="nucleotide sequence ID" value="NM_003966.3"/>
</dbReference>
<dbReference type="RefSeq" id="XP_006714569.1">
    <property type="nucleotide sequence ID" value="XM_006714506.4"/>
</dbReference>
<dbReference type="RefSeq" id="XP_006714570.1">
    <property type="nucleotide sequence ID" value="XM_006714507.4"/>
</dbReference>
<dbReference type="RefSeq" id="XP_011512457.1">
    <property type="nucleotide sequence ID" value="XM_011514155.3"/>
</dbReference>
<dbReference type="RefSeq" id="XP_011512458.1">
    <property type="nucleotide sequence ID" value="XM_011514156.3"/>
</dbReference>
<dbReference type="RefSeq" id="XP_011512459.1">
    <property type="nucleotide sequence ID" value="XM_011514157.3"/>
</dbReference>
<dbReference type="RefSeq" id="XP_011512460.1">
    <property type="nucleotide sequence ID" value="XM_011514158.3"/>
</dbReference>
<dbReference type="RefSeq" id="XP_047273821.1">
    <property type="nucleotide sequence ID" value="XM_047417865.1"/>
</dbReference>
<dbReference type="RefSeq" id="XP_047273822.1">
    <property type="nucleotide sequence ID" value="XM_047417866.1"/>
</dbReference>
<dbReference type="RefSeq" id="XP_054209730.1">
    <property type="nucleotide sequence ID" value="XM_054353755.1"/>
</dbReference>
<dbReference type="RefSeq" id="XP_054209731.1">
    <property type="nucleotide sequence ID" value="XM_054353756.1"/>
</dbReference>
<dbReference type="RefSeq" id="XP_054209732.1">
    <property type="nucleotide sequence ID" value="XM_054353757.1"/>
</dbReference>
<dbReference type="RefSeq" id="XP_054209733.1">
    <property type="nucleotide sequence ID" value="XM_054353758.1"/>
</dbReference>
<dbReference type="RefSeq" id="XP_054209734.1">
    <property type="nucleotide sequence ID" value="XM_054353759.1"/>
</dbReference>
<dbReference type="RefSeq" id="XP_054209735.1">
    <property type="nucleotide sequence ID" value="XM_054353760.1"/>
</dbReference>
<dbReference type="RefSeq" id="XP_054209736.1">
    <property type="nucleotide sequence ID" value="XM_054353761.1"/>
</dbReference>
<dbReference type="RefSeq" id="XP_054209737.1">
    <property type="nucleotide sequence ID" value="XM_054353762.1"/>
</dbReference>
<dbReference type="PDB" id="8CKG">
    <property type="method" value="X-ray"/>
    <property type="resolution" value="1.71 A"/>
    <property type="chains" value="A/B=652-768"/>
</dbReference>
<dbReference type="PDB" id="8CKK">
    <property type="method" value="X-ray"/>
    <property type="resolution" value="1.56 A"/>
    <property type="chains" value="A/B=652-765"/>
</dbReference>
<dbReference type="PDB" id="8CKL">
    <property type="method" value="X-ray"/>
    <property type="resolution" value="2.56 A"/>
    <property type="chains" value="A/B=652-765"/>
</dbReference>
<dbReference type="PDB" id="8CKM">
    <property type="method" value="X-ray"/>
    <property type="resolution" value="2.72 A"/>
    <property type="chains" value="A/B=652-768"/>
</dbReference>
<dbReference type="PDBsum" id="8CKG"/>
<dbReference type="PDBsum" id="8CKK"/>
<dbReference type="PDBsum" id="8CKL"/>
<dbReference type="PDBsum" id="8CKM"/>
<dbReference type="SMR" id="Q13591"/>
<dbReference type="BioGRID" id="114501">
    <property type="interactions" value="1"/>
</dbReference>
<dbReference type="FunCoup" id="Q13591">
    <property type="interactions" value="199"/>
</dbReference>
<dbReference type="IntAct" id="Q13591">
    <property type="interactions" value="2"/>
</dbReference>
<dbReference type="STRING" id="9606.ENSP00000371936"/>
<dbReference type="GlyCosmos" id="Q13591">
    <property type="glycosylation" value="11 sites, No reported glycans"/>
</dbReference>
<dbReference type="GlyGen" id="Q13591">
    <property type="glycosylation" value="11 sites, 2 N-linked glycans (1 site)"/>
</dbReference>
<dbReference type="iPTMnet" id="Q13591"/>
<dbReference type="PhosphoSitePlus" id="Q13591"/>
<dbReference type="SwissPalm" id="Q13591"/>
<dbReference type="BioMuta" id="SEMA5A"/>
<dbReference type="DMDM" id="109939725"/>
<dbReference type="jPOST" id="Q13591"/>
<dbReference type="MassIVE" id="Q13591"/>
<dbReference type="PaxDb" id="9606-ENSP00000371936"/>
<dbReference type="PeptideAtlas" id="Q13591"/>
<dbReference type="ProteomicsDB" id="59586"/>
<dbReference type="Antibodypedia" id="960">
    <property type="antibodies" value="290 antibodies from 28 providers"/>
</dbReference>
<dbReference type="DNASU" id="9037"/>
<dbReference type="Ensembl" id="ENST00000382496.10">
    <property type="protein sequence ID" value="ENSP00000371936.5"/>
    <property type="gene ID" value="ENSG00000112902.12"/>
</dbReference>
<dbReference type="Ensembl" id="ENST00000652226.1">
    <property type="protein sequence ID" value="ENSP00000499013.1"/>
    <property type="gene ID" value="ENSG00000112902.12"/>
</dbReference>
<dbReference type="GeneID" id="9037"/>
<dbReference type="KEGG" id="hsa:9037"/>
<dbReference type="MANE-Select" id="ENST00000382496.10">
    <property type="protein sequence ID" value="ENSP00000371936.5"/>
    <property type="RefSeq nucleotide sequence ID" value="NM_003966.3"/>
    <property type="RefSeq protein sequence ID" value="NP_003957.2"/>
</dbReference>
<dbReference type="AGR" id="HGNC:10736"/>
<dbReference type="CTD" id="9037"/>
<dbReference type="DisGeNET" id="9037"/>
<dbReference type="GeneCards" id="SEMA5A"/>
<dbReference type="HGNC" id="HGNC:10736">
    <property type="gene designation" value="SEMA5A"/>
</dbReference>
<dbReference type="HPA" id="ENSG00000112902">
    <property type="expression patterns" value="Low tissue specificity"/>
</dbReference>
<dbReference type="MalaCards" id="SEMA5A"/>
<dbReference type="MIM" id="609297">
    <property type="type" value="gene"/>
</dbReference>
<dbReference type="neXtProt" id="NX_Q13591"/>
<dbReference type="OpenTargets" id="ENSG00000112902"/>
<dbReference type="Orphanet" id="281">
    <property type="disease" value="Monosomy 5p syndrome"/>
</dbReference>
<dbReference type="PharmGKB" id="PA35658"/>
<dbReference type="VEuPathDB" id="HostDB:ENSG00000112902"/>
<dbReference type="eggNOG" id="KOG3611">
    <property type="taxonomic scope" value="Eukaryota"/>
</dbReference>
<dbReference type="GeneTree" id="ENSGT00940000158036"/>
<dbReference type="HOGENOM" id="CLU_005410_1_0_1"/>
<dbReference type="InParanoid" id="Q13591"/>
<dbReference type="OMA" id="YHTRSTC"/>
<dbReference type="OrthoDB" id="9988752at2759"/>
<dbReference type="PAN-GO" id="Q13591">
    <property type="GO annotations" value="9 GO annotations based on evolutionary models"/>
</dbReference>
<dbReference type="PhylomeDB" id="Q13591"/>
<dbReference type="TreeFam" id="TF329951"/>
<dbReference type="PathwayCommons" id="Q13591"/>
<dbReference type="Reactome" id="R-HSA-416700">
    <property type="pathway name" value="Other semaphorin interactions"/>
</dbReference>
<dbReference type="Reactome" id="R-HSA-5083635">
    <property type="pathway name" value="Defective B3GALTL causes PpS"/>
</dbReference>
<dbReference type="Reactome" id="R-HSA-5173214">
    <property type="pathway name" value="O-glycosylation of TSR domain-containing proteins"/>
</dbReference>
<dbReference type="SignaLink" id="Q13591"/>
<dbReference type="SIGNOR" id="Q13591"/>
<dbReference type="BioGRID-ORCS" id="9037">
    <property type="hits" value="10 hits in 1140 CRISPR screens"/>
</dbReference>
<dbReference type="ChiTaRS" id="SEMA5A">
    <property type="organism name" value="human"/>
</dbReference>
<dbReference type="GeneWiki" id="SEMA5A"/>
<dbReference type="GenomeRNAi" id="9037"/>
<dbReference type="Pharos" id="Q13591">
    <property type="development level" value="Tbio"/>
</dbReference>
<dbReference type="PRO" id="PR:Q13591"/>
<dbReference type="Proteomes" id="UP000005640">
    <property type="component" value="Chromosome 5"/>
</dbReference>
<dbReference type="RNAct" id="Q13591">
    <property type="molecule type" value="protein"/>
</dbReference>
<dbReference type="Bgee" id="ENSG00000112902">
    <property type="expression patterns" value="Expressed in metanephric glomerulus and 189 other cell types or tissues"/>
</dbReference>
<dbReference type="ExpressionAtlas" id="Q13591">
    <property type="expression patterns" value="baseline and differential"/>
</dbReference>
<dbReference type="GO" id="GO:0070062">
    <property type="term" value="C:extracellular exosome"/>
    <property type="evidence" value="ECO:0007005"/>
    <property type="project" value="UniProtKB"/>
</dbReference>
<dbReference type="GO" id="GO:0016020">
    <property type="term" value="C:membrane"/>
    <property type="evidence" value="ECO:0000250"/>
    <property type="project" value="UniProtKB"/>
</dbReference>
<dbReference type="GO" id="GO:0005886">
    <property type="term" value="C:plasma membrane"/>
    <property type="evidence" value="ECO:0000318"/>
    <property type="project" value="GO_Central"/>
</dbReference>
<dbReference type="GO" id="GO:0045499">
    <property type="term" value="F:chemorepellent activity"/>
    <property type="evidence" value="ECO:0000318"/>
    <property type="project" value="GO_Central"/>
</dbReference>
<dbReference type="GO" id="GO:0035373">
    <property type="term" value="F:chondroitin sulfate proteoglycan binding"/>
    <property type="evidence" value="ECO:0000250"/>
    <property type="project" value="UniProtKB"/>
</dbReference>
<dbReference type="GO" id="GO:0043395">
    <property type="term" value="F:heparan sulfate proteoglycan binding"/>
    <property type="evidence" value="ECO:0000250"/>
    <property type="project" value="UniProtKB"/>
</dbReference>
<dbReference type="GO" id="GO:0030215">
    <property type="term" value="F:semaphorin receptor binding"/>
    <property type="evidence" value="ECO:0000250"/>
    <property type="project" value="UniProtKB"/>
</dbReference>
<dbReference type="GO" id="GO:0045545">
    <property type="term" value="F:syndecan binding"/>
    <property type="evidence" value="ECO:0000250"/>
    <property type="project" value="UniProtKB"/>
</dbReference>
<dbReference type="GO" id="GO:0048675">
    <property type="term" value="P:axon extension"/>
    <property type="evidence" value="ECO:0000318"/>
    <property type="project" value="GO_Central"/>
</dbReference>
<dbReference type="GO" id="GO:0007411">
    <property type="term" value="P:axon guidance"/>
    <property type="evidence" value="ECO:0000318"/>
    <property type="project" value="GO_Central"/>
</dbReference>
<dbReference type="GO" id="GO:0007413">
    <property type="term" value="P:axonal fasciculation"/>
    <property type="evidence" value="ECO:0000250"/>
    <property type="project" value="UniProtKB"/>
</dbReference>
<dbReference type="GO" id="GO:0002043">
    <property type="term" value="P:blood vessel endothelial cell proliferation involved in sprouting angiogenesis"/>
    <property type="evidence" value="ECO:0000250"/>
    <property type="project" value="UniProtKB"/>
</dbReference>
<dbReference type="GO" id="GO:0007155">
    <property type="term" value="P:cell adhesion"/>
    <property type="evidence" value="ECO:0000304"/>
    <property type="project" value="ProtInc"/>
</dbReference>
<dbReference type="GO" id="GO:0060326">
    <property type="term" value="P:cell chemotaxis"/>
    <property type="evidence" value="ECO:0000250"/>
    <property type="project" value="UniProtKB"/>
</dbReference>
<dbReference type="GO" id="GO:0007267">
    <property type="term" value="P:cell-cell signaling"/>
    <property type="evidence" value="ECO:0000304"/>
    <property type="project" value="ProtInc"/>
</dbReference>
<dbReference type="GO" id="GO:0021536">
    <property type="term" value="P:diencephalon development"/>
    <property type="evidence" value="ECO:0000250"/>
    <property type="project" value="UniProtKB"/>
</dbReference>
<dbReference type="GO" id="GO:0048843">
    <property type="term" value="P:negative regulation of axon extension involved in axon guidance"/>
    <property type="evidence" value="ECO:0000250"/>
    <property type="project" value="UniProtKB"/>
</dbReference>
<dbReference type="GO" id="GO:0007162">
    <property type="term" value="P:negative regulation of cell adhesion"/>
    <property type="evidence" value="ECO:0000250"/>
    <property type="project" value="UniProtKB"/>
</dbReference>
<dbReference type="GO" id="GO:2000352">
    <property type="term" value="P:negative regulation of endothelial cell apoptotic process"/>
    <property type="evidence" value="ECO:0000250"/>
    <property type="project" value="UniProtKB"/>
</dbReference>
<dbReference type="GO" id="GO:0007399">
    <property type="term" value="P:nervous system development"/>
    <property type="evidence" value="ECO:0000304"/>
    <property type="project" value="ProtInc"/>
</dbReference>
<dbReference type="GO" id="GO:0001755">
    <property type="term" value="P:neural crest cell migration"/>
    <property type="evidence" value="ECO:0000318"/>
    <property type="project" value="GO_Central"/>
</dbReference>
<dbReference type="GO" id="GO:0050918">
    <property type="term" value="P:positive chemotaxis"/>
    <property type="evidence" value="ECO:0000250"/>
    <property type="project" value="UniProtKB"/>
</dbReference>
<dbReference type="GO" id="GO:0030836">
    <property type="term" value="P:positive regulation of actin filament depolymerization"/>
    <property type="evidence" value="ECO:0000250"/>
    <property type="project" value="UniProtKB"/>
</dbReference>
<dbReference type="GO" id="GO:0045766">
    <property type="term" value="P:positive regulation of angiogenesis"/>
    <property type="evidence" value="ECO:0000250"/>
    <property type="project" value="UniProtKB"/>
</dbReference>
<dbReference type="GO" id="GO:0048842">
    <property type="term" value="P:positive regulation of axon extension involved in axon guidance"/>
    <property type="evidence" value="ECO:0000250"/>
    <property type="project" value="UniProtKB"/>
</dbReference>
<dbReference type="GO" id="GO:0090263">
    <property type="term" value="P:positive regulation of canonical Wnt signaling pathway"/>
    <property type="evidence" value="ECO:0000250"/>
    <property type="project" value="UniProtKB"/>
</dbReference>
<dbReference type="GO" id="GO:0030335">
    <property type="term" value="P:positive regulation of cell migration"/>
    <property type="evidence" value="ECO:0000318"/>
    <property type="project" value="GO_Central"/>
</dbReference>
<dbReference type="GO" id="GO:2001028">
    <property type="term" value="P:positive regulation of endothelial cell chemotaxis"/>
    <property type="evidence" value="ECO:0000250"/>
    <property type="project" value="UniProtKB"/>
</dbReference>
<dbReference type="GO" id="GO:0001938">
    <property type="term" value="P:positive regulation of endothelial cell proliferation"/>
    <property type="evidence" value="ECO:0000250"/>
    <property type="project" value="UniProtKB"/>
</dbReference>
<dbReference type="GO" id="GO:0051897">
    <property type="term" value="P:positive regulation of phosphatidylinositol 3-kinase/protein kinase B signal transduction"/>
    <property type="evidence" value="ECO:0000250"/>
    <property type="project" value="UniProtKB"/>
</dbReference>
<dbReference type="GO" id="GO:0071526">
    <property type="term" value="P:semaphorin-plexin signaling pathway"/>
    <property type="evidence" value="ECO:0000318"/>
    <property type="project" value="GO_Central"/>
</dbReference>
<dbReference type="GO" id="GO:1990256">
    <property type="term" value="P:signal clustering"/>
    <property type="evidence" value="ECO:0000250"/>
    <property type="project" value="UniProtKB"/>
</dbReference>
<dbReference type="CDD" id="cd11263">
    <property type="entry name" value="Sema_5A"/>
    <property type="match status" value="1"/>
</dbReference>
<dbReference type="FunFam" id="2.20.100.10:FF:000001">
    <property type="entry name" value="semaphorin-5A isoform X1"/>
    <property type="match status" value="3"/>
</dbReference>
<dbReference type="FunFam" id="2.130.10.10:FF:000048">
    <property type="entry name" value="semaphorin-5B isoform X1"/>
    <property type="match status" value="1"/>
</dbReference>
<dbReference type="FunFam" id="2.20.100.10:FF:000021">
    <property type="entry name" value="semaphorin-5B isoform X1"/>
    <property type="match status" value="1"/>
</dbReference>
<dbReference type="FunFam" id="3.30.1680.10:FF:000003">
    <property type="entry name" value="semaphorin-5B isoform X1"/>
    <property type="match status" value="1"/>
</dbReference>
<dbReference type="FunFam" id="2.20.100.10:FF:000007">
    <property type="entry name" value="Thrombospondin 1"/>
    <property type="match status" value="1"/>
</dbReference>
<dbReference type="Gene3D" id="3.30.1680.10">
    <property type="entry name" value="ligand-binding face of the semaphorins, domain 2"/>
    <property type="match status" value="1"/>
</dbReference>
<dbReference type="Gene3D" id="2.20.100.10">
    <property type="entry name" value="Thrombospondin type-1 (TSP1) repeat"/>
    <property type="match status" value="6"/>
</dbReference>
<dbReference type="Gene3D" id="2.130.10.10">
    <property type="entry name" value="YVTN repeat-like/Quinoprotein amine dehydrogenase"/>
    <property type="match status" value="1"/>
</dbReference>
<dbReference type="InterPro" id="IPR002165">
    <property type="entry name" value="Plexin_repeat"/>
</dbReference>
<dbReference type="InterPro" id="IPR016201">
    <property type="entry name" value="PSI"/>
</dbReference>
<dbReference type="InterPro" id="IPR042821">
    <property type="entry name" value="Sema5A_sema"/>
</dbReference>
<dbReference type="InterPro" id="IPR001627">
    <property type="entry name" value="Semap_dom"/>
</dbReference>
<dbReference type="InterPro" id="IPR036352">
    <property type="entry name" value="Semap_dom_sf"/>
</dbReference>
<dbReference type="InterPro" id="IPR027231">
    <property type="entry name" value="Semaphorin"/>
</dbReference>
<dbReference type="InterPro" id="IPR000884">
    <property type="entry name" value="TSP1_rpt"/>
</dbReference>
<dbReference type="InterPro" id="IPR036383">
    <property type="entry name" value="TSP1_rpt_sf"/>
</dbReference>
<dbReference type="InterPro" id="IPR015943">
    <property type="entry name" value="WD40/YVTN_repeat-like_dom_sf"/>
</dbReference>
<dbReference type="PANTHER" id="PTHR11036">
    <property type="entry name" value="SEMAPHORIN"/>
    <property type="match status" value="1"/>
</dbReference>
<dbReference type="PANTHER" id="PTHR11036:SF78">
    <property type="entry name" value="SEMAPHORIN-5A"/>
    <property type="match status" value="1"/>
</dbReference>
<dbReference type="Pfam" id="PF01437">
    <property type="entry name" value="PSI"/>
    <property type="match status" value="1"/>
</dbReference>
<dbReference type="Pfam" id="PF01403">
    <property type="entry name" value="Sema"/>
    <property type="match status" value="1"/>
</dbReference>
<dbReference type="Pfam" id="PF23260">
    <property type="entry name" value="TSP1_2"/>
    <property type="match status" value="1"/>
</dbReference>
<dbReference type="Pfam" id="PF00090">
    <property type="entry name" value="TSP_1"/>
    <property type="match status" value="5"/>
</dbReference>
<dbReference type="PRINTS" id="PR01705">
    <property type="entry name" value="TSP1REPEAT"/>
</dbReference>
<dbReference type="SMART" id="SM00423">
    <property type="entry name" value="PSI"/>
    <property type="match status" value="1"/>
</dbReference>
<dbReference type="SMART" id="SM00630">
    <property type="entry name" value="Sema"/>
    <property type="match status" value="1"/>
</dbReference>
<dbReference type="SMART" id="SM00209">
    <property type="entry name" value="TSP1"/>
    <property type="match status" value="6"/>
</dbReference>
<dbReference type="SUPFAM" id="SSF103575">
    <property type="entry name" value="Plexin repeat"/>
    <property type="match status" value="1"/>
</dbReference>
<dbReference type="SUPFAM" id="SSF101912">
    <property type="entry name" value="Sema domain"/>
    <property type="match status" value="1"/>
</dbReference>
<dbReference type="SUPFAM" id="SSF82895">
    <property type="entry name" value="TSP-1 type 1 repeat"/>
    <property type="match status" value="6"/>
</dbReference>
<dbReference type="PROSITE" id="PS51004">
    <property type="entry name" value="SEMA"/>
    <property type="match status" value="1"/>
</dbReference>
<dbReference type="PROSITE" id="PS50092">
    <property type="entry name" value="TSP1"/>
    <property type="match status" value="6"/>
</dbReference>
<gene>
    <name type="primary">SEMA5A</name>
    <name type="synonym">SEMAF</name>
</gene>